<keyword id="KW-0963">Cytoplasm</keyword>
<keyword id="KW-0378">Hydrolase</keyword>
<keyword id="KW-0597">Phosphoprotein</keyword>
<keyword id="KW-1185">Reference proteome</keyword>
<dbReference type="EC" id="3.1.3.-"/>
<dbReference type="EMBL" id="CU329670">
    <property type="protein sequence ID" value="CAB11494.2"/>
    <property type="molecule type" value="Genomic_DNA"/>
</dbReference>
<dbReference type="PIR" id="T39233">
    <property type="entry name" value="T39233"/>
</dbReference>
<dbReference type="SMR" id="O14306"/>
<dbReference type="BioGRID" id="278795">
    <property type="interactions" value="33"/>
</dbReference>
<dbReference type="FunCoup" id="O14306">
    <property type="interactions" value="46"/>
</dbReference>
<dbReference type="IntAct" id="O14306">
    <property type="interactions" value="1"/>
</dbReference>
<dbReference type="STRING" id="284812.O14306"/>
<dbReference type="iPTMnet" id="O14306"/>
<dbReference type="PaxDb" id="4896-SPAC9G1.10c.1"/>
<dbReference type="EnsemblFungi" id="SPAC9G1.10c.1">
    <property type="protein sequence ID" value="SPAC9G1.10c.1:pep"/>
    <property type="gene ID" value="SPAC9G1.10c"/>
</dbReference>
<dbReference type="KEGG" id="spo:2542329"/>
<dbReference type="PomBase" id="SPAC9G1.10c"/>
<dbReference type="VEuPathDB" id="FungiDB:SPAC9G1.10c"/>
<dbReference type="eggNOG" id="KOG0565">
    <property type="taxonomic scope" value="Eukaryota"/>
</dbReference>
<dbReference type="HOGENOM" id="CLU_002027_1_0_1"/>
<dbReference type="InParanoid" id="O14306"/>
<dbReference type="OMA" id="CVFVKHK"/>
<dbReference type="PhylomeDB" id="O14306"/>
<dbReference type="Reactome" id="R-SPO-1660499">
    <property type="pathway name" value="Synthesis of PIPs at the plasma membrane"/>
</dbReference>
<dbReference type="Reactome" id="R-SPO-1660514">
    <property type="pathway name" value="Synthesis of PIPs at the Golgi membrane"/>
</dbReference>
<dbReference type="Reactome" id="R-SPO-1855183">
    <property type="pathway name" value="Synthesis of IP2, IP, and Ins in the cytosol"/>
</dbReference>
<dbReference type="Reactome" id="R-SPO-1855204">
    <property type="pathway name" value="Synthesis of IP3 and IP4 in the cytosol"/>
</dbReference>
<dbReference type="Reactome" id="R-SPO-8856828">
    <property type="pathway name" value="Clathrin-mediated endocytosis"/>
</dbReference>
<dbReference type="Reactome" id="R-SPO-9013409">
    <property type="pathway name" value="RHOJ GTPase cycle"/>
</dbReference>
<dbReference type="PRO" id="PR:O14306"/>
<dbReference type="Proteomes" id="UP000002485">
    <property type="component" value="Chromosome I"/>
</dbReference>
<dbReference type="GO" id="GO:0030479">
    <property type="term" value="C:actin cortical patch"/>
    <property type="evidence" value="ECO:0000266"/>
    <property type="project" value="PomBase"/>
</dbReference>
<dbReference type="GO" id="GO:0032153">
    <property type="term" value="C:cell division site"/>
    <property type="evidence" value="ECO:0007005"/>
    <property type="project" value="PomBase"/>
</dbReference>
<dbReference type="GO" id="GO:0051286">
    <property type="term" value="C:cell tip"/>
    <property type="evidence" value="ECO:0007005"/>
    <property type="project" value="PomBase"/>
</dbReference>
<dbReference type="GO" id="GO:0005737">
    <property type="term" value="C:cytoplasm"/>
    <property type="evidence" value="ECO:0000318"/>
    <property type="project" value="GO_Central"/>
</dbReference>
<dbReference type="GO" id="GO:0005829">
    <property type="term" value="C:cytosol"/>
    <property type="evidence" value="ECO:0007005"/>
    <property type="project" value="PomBase"/>
</dbReference>
<dbReference type="GO" id="GO:0016020">
    <property type="term" value="C:membrane"/>
    <property type="evidence" value="ECO:0000318"/>
    <property type="project" value="GO_Central"/>
</dbReference>
<dbReference type="GO" id="GO:0004439">
    <property type="term" value="F:phosphatidylinositol-4,5-bisphosphate 5-phosphatase activity"/>
    <property type="evidence" value="ECO:0000318"/>
    <property type="project" value="GO_Central"/>
</dbReference>
<dbReference type="GO" id="GO:0046856">
    <property type="term" value="P:phosphatidylinositol dephosphorylation"/>
    <property type="evidence" value="ECO:0007669"/>
    <property type="project" value="InterPro"/>
</dbReference>
<dbReference type="GO" id="GO:0046488">
    <property type="term" value="P:phosphatidylinositol metabolic process"/>
    <property type="evidence" value="ECO:0000305"/>
    <property type="project" value="PomBase"/>
</dbReference>
<dbReference type="CDD" id="cd14273">
    <property type="entry name" value="UBA_TAP-C_like"/>
    <property type="match status" value="1"/>
</dbReference>
<dbReference type="Gene3D" id="1.10.8.10">
    <property type="entry name" value="DNA helicase RuvA subunit, C-terminal domain"/>
    <property type="match status" value="1"/>
</dbReference>
<dbReference type="Gene3D" id="3.60.10.10">
    <property type="entry name" value="Endonuclease/exonuclease/phosphatase"/>
    <property type="match status" value="1"/>
</dbReference>
<dbReference type="Gene3D" id="2.130.10.10">
    <property type="entry name" value="YVTN repeat-like/Quinoprotein amine dehydrogenase"/>
    <property type="match status" value="1"/>
</dbReference>
<dbReference type="InterPro" id="IPR036691">
    <property type="entry name" value="Endo/exonu/phosph_ase_sf"/>
</dbReference>
<dbReference type="InterPro" id="IPR046985">
    <property type="entry name" value="IP5"/>
</dbReference>
<dbReference type="InterPro" id="IPR000300">
    <property type="entry name" value="IPPc"/>
</dbReference>
<dbReference type="InterPro" id="IPR011047">
    <property type="entry name" value="Quinoprotein_ADH-like_sf"/>
</dbReference>
<dbReference type="InterPro" id="IPR015943">
    <property type="entry name" value="WD40/YVTN_repeat-like_dom_sf"/>
</dbReference>
<dbReference type="PANTHER" id="PTHR11200">
    <property type="entry name" value="INOSITOL 5-PHOSPHATASE"/>
    <property type="match status" value="1"/>
</dbReference>
<dbReference type="PANTHER" id="PTHR11200:SF240">
    <property type="entry name" value="INOSITOL POLYPHOSPHATE 5-PHOSPHATASE C9G1.10C-RELATED"/>
    <property type="match status" value="1"/>
</dbReference>
<dbReference type="Pfam" id="PF22669">
    <property type="entry name" value="Exo_endo_phos2"/>
    <property type="match status" value="1"/>
</dbReference>
<dbReference type="SMART" id="SM00128">
    <property type="entry name" value="IPPc"/>
    <property type="match status" value="1"/>
</dbReference>
<dbReference type="SUPFAM" id="SSF56219">
    <property type="entry name" value="DNase I-like"/>
    <property type="match status" value="1"/>
</dbReference>
<dbReference type="SUPFAM" id="SSF50998">
    <property type="entry name" value="Quinoprotein alcohol dehydrogenase-like"/>
    <property type="match status" value="1"/>
</dbReference>
<organism>
    <name type="scientific">Schizosaccharomyces pombe (strain 972 / ATCC 24843)</name>
    <name type="common">Fission yeast</name>
    <dbReference type="NCBI Taxonomy" id="284812"/>
    <lineage>
        <taxon>Eukaryota</taxon>
        <taxon>Fungi</taxon>
        <taxon>Dikarya</taxon>
        <taxon>Ascomycota</taxon>
        <taxon>Taphrinomycotina</taxon>
        <taxon>Schizosaccharomycetes</taxon>
        <taxon>Schizosaccharomycetales</taxon>
        <taxon>Schizosaccharomycetaceae</taxon>
        <taxon>Schizosaccharomyces</taxon>
    </lineage>
</organism>
<accession>O14306</accession>
<protein>
    <recommendedName>
        <fullName>Probable inositol polyphosphate 5-phosphatase C9G1.10c</fullName>
        <ecNumber>3.1.3.-</ecNumber>
    </recommendedName>
</protein>
<evidence type="ECO:0000256" key="1">
    <source>
        <dbReference type="SAM" id="MobiDB-lite"/>
    </source>
</evidence>
<evidence type="ECO:0000269" key="2">
    <source>
    </source>
</evidence>
<evidence type="ECO:0000269" key="3">
    <source>
    </source>
</evidence>
<evidence type="ECO:0000305" key="4"/>
<evidence type="ECO:0000312" key="5">
    <source>
        <dbReference type="EMBL" id="CAB11494.2"/>
    </source>
</evidence>
<reference evidence="5" key="1">
    <citation type="journal article" date="2002" name="Nature">
        <title>The genome sequence of Schizosaccharomyces pombe.</title>
        <authorList>
            <person name="Wood V."/>
            <person name="Gwilliam R."/>
            <person name="Rajandream M.A."/>
            <person name="Lyne M.H."/>
            <person name="Lyne R."/>
            <person name="Stewart A."/>
            <person name="Sgouros J.G."/>
            <person name="Peat N."/>
            <person name="Hayles J."/>
            <person name="Baker S.G."/>
            <person name="Basham D."/>
            <person name="Bowman S."/>
            <person name="Brooks K."/>
            <person name="Brown D."/>
            <person name="Brown S."/>
            <person name="Chillingworth T."/>
            <person name="Churcher C.M."/>
            <person name="Collins M."/>
            <person name="Connor R."/>
            <person name="Cronin A."/>
            <person name="Davis P."/>
            <person name="Feltwell T."/>
            <person name="Fraser A."/>
            <person name="Gentles S."/>
            <person name="Goble A."/>
            <person name="Hamlin N."/>
            <person name="Harris D.E."/>
            <person name="Hidalgo J."/>
            <person name="Hodgson G."/>
            <person name="Holroyd S."/>
            <person name="Hornsby T."/>
            <person name="Howarth S."/>
            <person name="Huckle E.J."/>
            <person name="Hunt S."/>
            <person name="Jagels K."/>
            <person name="James K.D."/>
            <person name="Jones L."/>
            <person name="Jones M."/>
            <person name="Leather S."/>
            <person name="McDonald S."/>
            <person name="McLean J."/>
            <person name="Mooney P."/>
            <person name="Moule S."/>
            <person name="Mungall K.L."/>
            <person name="Murphy L.D."/>
            <person name="Niblett D."/>
            <person name="Odell C."/>
            <person name="Oliver K."/>
            <person name="O'Neil S."/>
            <person name="Pearson D."/>
            <person name="Quail M.A."/>
            <person name="Rabbinowitsch E."/>
            <person name="Rutherford K.M."/>
            <person name="Rutter S."/>
            <person name="Saunders D."/>
            <person name="Seeger K."/>
            <person name="Sharp S."/>
            <person name="Skelton J."/>
            <person name="Simmonds M.N."/>
            <person name="Squares R."/>
            <person name="Squares S."/>
            <person name="Stevens K."/>
            <person name="Taylor K."/>
            <person name="Taylor R.G."/>
            <person name="Tivey A."/>
            <person name="Walsh S.V."/>
            <person name="Warren T."/>
            <person name="Whitehead S."/>
            <person name="Woodward J.R."/>
            <person name="Volckaert G."/>
            <person name="Aert R."/>
            <person name="Robben J."/>
            <person name="Grymonprez B."/>
            <person name="Weltjens I."/>
            <person name="Vanstreels E."/>
            <person name="Rieger M."/>
            <person name="Schaefer M."/>
            <person name="Mueller-Auer S."/>
            <person name="Gabel C."/>
            <person name="Fuchs M."/>
            <person name="Duesterhoeft A."/>
            <person name="Fritzc C."/>
            <person name="Holzer E."/>
            <person name="Moestl D."/>
            <person name="Hilbert H."/>
            <person name="Borzym K."/>
            <person name="Langer I."/>
            <person name="Beck A."/>
            <person name="Lehrach H."/>
            <person name="Reinhardt R."/>
            <person name="Pohl T.M."/>
            <person name="Eger P."/>
            <person name="Zimmermann W."/>
            <person name="Wedler H."/>
            <person name="Wambutt R."/>
            <person name="Purnelle B."/>
            <person name="Goffeau A."/>
            <person name="Cadieu E."/>
            <person name="Dreano S."/>
            <person name="Gloux S."/>
            <person name="Lelaure V."/>
            <person name="Mottier S."/>
            <person name="Galibert F."/>
            <person name="Aves S.J."/>
            <person name="Xiang Z."/>
            <person name="Hunt C."/>
            <person name="Moore K."/>
            <person name="Hurst S.M."/>
            <person name="Lucas M."/>
            <person name="Rochet M."/>
            <person name="Gaillardin C."/>
            <person name="Tallada V.A."/>
            <person name="Garzon A."/>
            <person name="Thode G."/>
            <person name="Daga R.R."/>
            <person name="Cruzado L."/>
            <person name="Jimenez J."/>
            <person name="Sanchez M."/>
            <person name="del Rey F."/>
            <person name="Benito J."/>
            <person name="Dominguez A."/>
            <person name="Revuelta J.L."/>
            <person name="Moreno S."/>
            <person name="Armstrong J."/>
            <person name="Forsburg S.L."/>
            <person name="Cerutti L."/>
            <person name="Lowe T."/>
            <person name="McCombie W.R."/>
            <person name="Paulsen I."/>
            <person name="Potashkin J."/>
            <person name="Shpakovski G.V."/>
            <person name="Ussery D."/>
            <person name="Barrell B.G."/>
            <person name="Nurse P."/>
        </authorList>
    </citation>
    <scope>NUCLEOTIDE SEQUENCE [LARGE SCALE GENOMIC DNA]</scope>
    <source>
        <strain>972 / ATCC 24843</strain>
    </source>
</reference>
<reference evidence="4" key="2">
    <citation type="journal article" date="2006" name="Nat. Biotechnol.">
        <title>ORFeome cloning and global analysis of protein localization in the fission yeast Schizosaccharomyces pombe.</title>
        <authorList>
            <person name="Matsuyama A."/>
            <person name="Arai R."/>
            <person name="Yashiroda Y."/>
            <person name="Shirai A."/>
            <person name="Kamata A."/>
            <person name="Sekido S."/>
            <person name="Kobayashi Y."/>
            <person name="Hashimoto A."/>
            <person name="Hamamoto M."/>
            <person name="Hiraoka Y."/>
            <person name="Horinouchi S."/>
            <person name="Yoshida M."/>
        </authorList>
    </citation>
    <scope>SUBCELLULAR LOCATION [LARGE SCALE ANALYSIS]</scope>
</reference>
<reference key="3">
    <citation type="journal article" date="2008" name="J. Proteome Res.">
        <title>Phosphoproteome analysis of fission yeast.</title>
        <authorList>
            <person name="Wilson-Grady J.T."/>
            <person name="Villen J."/>
            <person name="Gygi S.P."/>
        </authorList>
    </citation>
    <scope>PHOSPHORYLATION [LARGE SCALE ANALYSIS] AT SER-195</scope>
    <scope>IDENTIFICATION BY MASS SPECTROMETRY</scope>
</reference>
<proteinExistence type="evidence at protein level"/>
<gene>
    <name type="ORF">SPAC9G1.10c</name>
</gene>
<comment type="subcellular location">
    <subcellularLocation>
        <location evidence="2">Cytoplasm</location>
    </subcellularLocation>
    <text evidence="2">Barrier septum. Cell tip.</text>
</comment>
<comment type="similarity">
    <text evidence="4">Belongs to the inositol 1,4,5-trisphosphate 5-phosphatase family.</text>
</comment>
<sequence length="1191" mass="131274">MASRQGFSNVNEDEPELPPSVLSLKSKFESLSTGDLTNLDEKTAKRRTVKGCKNGTSEPNVFKARPIPPPRQVSSTIGSSTGRKVSGSIQRLASNFKNPSNPHADVSKIDRLPSDSSESHVATPSSPTISNSFVSVSPLLKRPQQKGPEISFQSSVQSTKGNDLMKHDDTNNHQIPPPKPNFSSKAGSSSPISVSPLKNVKAYISQSPTHSEASSVLSSEEEEENVINSSKSVPSFDLHDPFSQTFGKECPISTAPPVLNIGDRSLETPPPIPSPRPPQPVAVEAIQQSRAVISQQLPLHVSPRKPPKPPLRKVSTQRSSSPIENLATKSDASLVTGLQSSPYTHIAPASEMSLIPEKPRLPPRPSHTLSELSSPALTSENLSSKPSPLFPPPPPRVKSLATNKPVSMPVSTEQSDPSVAASSSSSSQLDVVLKGSIPDTSSVRRNPPCFVNGVESINVDFEARIFDVSGDRLVLAGNGGLRVYDTVTGLCHWHMPLGDTKVTSLSFKSSPENYSDDGRFVWFGTRDGMLWEVDVQNHHIVTKKSVSNCPITYVMVYKNEMWTLDDMGKLYVWQEDEIMGLSIQSTPHSIRTIPHATHAMVLDNRLLWVVVGKSIYVYDPSTSENESASVLAKPMTPPGLIGDISCGTTISNFTDLVFYGHVDGKISIFSKTQYRFLELITSSSFYRICSLVGVGNTLWAAYTTGMIYVFDVSESPWRLLKSWHGHKASHNGATTILGIDVNSVWKAKRLQVVSMASSVVKFWDGLMMGDWLATEMRSRFPEYSNFTDVSILICSWNAGASKPSDLDSDTIGASMIPMMIRDNGYPDIVVFGFQELVDLENKRLTARSILSKSSSKGGSSNSANISSQYRLWREKLESEMMRVSSNDDYQVLVCENLVGLFSCVFVKNKLQSKIRMLQSTTVKTGLGGLHGNKGAIVVRFLVDDTSYCIVNCHLAAGQSNKAARNNDLATILDNASLFPENDETDQLNTFVGGGDGSLIMDHEVCVLHGDLNYRINTLRPKALDLIKKNDIKTLLQSDQLLVERKRNAGFRLRTFTEPEITFAPTYKYDVHSEQYDSSEKKRVPAWCDRICYRGSPDYISAENYTRYELKASDHRPVSALIHSKAKMVNAQSQGSTWDVVKRKWIEYADEFKRKAKITYVMNYTSVSYQTAEQYLSGNNWNVQNALKQVSS</sequence>
<name>YE8A_SCHPO</name>
<feature type="chain" id="PRO_0000316865" description="Probable inositol polyphosphate 5-phosphatase C9G1.10c">
    <location>
        <begin position="1"/>
        <end position="1191"/>
    </location>
</feature>
<feature type="region of interest" description="Disordered" evidence="1">
    <location>
        <begin position="1"/>
        <end position="193"/>
    </location>
</feature>
<feature type="region of interest" description="Disordered" evidence="1">
    <location>
        <begin position="205"/>
        <end position="281"/>
    </location>
</feature>
<feature type="region of interest" description="Disordered" evidence="1">
    <location>
        <begin position="294"/>
        <end position="334"/>
    </location>
</feature>
<feature type="region of interest" description="Disordered" evidence="1">
    <location>
        <begin position="355"/>
        <end position="425"/>
    </location>
</feature>
<feature type="compositionally biased region" description="Polar residues" evidence="1">
    <location>
        <begin position="1"/>
        <end position="10"/>
    </location>
</feature>
<feature type="compositionally biased region" description="Polar residues" evidence="1">
    <location>
        <begin position="72"/>
        <end position="101"/>
    </location>
</feature>
<feature type="compositionally biased region" description="Polar residues" evidence="1">
    <location>
        <begin position="114"/>
        <end position="135"/>
    </location>
</feature>
<feature type="compositionally biased region" description="Polar residues" evidence="1">
    <location>
        <begin position="151"/>
        <end position="161"/>
    </location>
</feature>
<feature type="compositionally biased region" description="Polar residues" evidence="1">
    <location>
        <begin position="181"/>
        <end position="193"/>
    </location>
</feature>
<feature type="compositionally biased region" description="Pro residues" evidence="1">
    <location>
        <begin position="268"/>
        <end position="280"/>
    </location>
</feature>
<feature type="compositionally biased region" description="Basic residues" evidence="1">
    <location>
        <begin position="302"/>
        <end position="311"/>
    </location>
</feature>
<feature type="compositionally biased region" description="Polar residues" evidence="1">
    <location>
        <begin position="316"/>
        <end position="334"/>
    </location>
</feature>
<feature type="compositionally biased region" description="Polar residues" evidence="1">
    <location>
        <begin position="367"/>
        <end position="382"/>
    </location>
</feature>
<feature type="compositionally biased region" description="Polar residues" evidence="1">
    <location>
        <begin position="400"/>
        <end position="413"/>
    </location>
</feature>
<feature type="compositionally biased region" description="Low complexity" evidence="1">
    <location>
        <begin position="414"/>
        <end position="425"/>
    </location>
</feature>
<feature type="modified residue" description="Phosphoserine" evidence="3">
    <location>
        <position position="195"/>
    </location>
</feature>